<accession>M1L535</accession>
<protein>
    <recommendedName>
        <fullName>Protein OPG128</fullName>
    </recommendedName>
</protein>
<feature type="chain" id="PRO_0000457512" description="Protein OPG128">
    <location>
        <begin position="1"/>
        <end position="77"/>
    </location>
</feature>
<dbReference type="EMBL" id="KC257461">
    <property type="protein sequence ID" value="AGF37017.1"/>
    <property type="molecule type" value="Genomic_DNA"/>
</dbReference>
<dbReference type="EMBL" id="MT903340">
    <property type="protein sequence ID" value="QNP12983.1"/>
    <property type="molecule type" value="Genomic_DNA"/>
</dbReference>
<dbReference type="RefSeq" id="NP_536540.1">
    <property type="nucleotide sequence ID" value="NC_003310.1"/>
</dbReference>
<dbReference type="RefSeq" id="YP_010377110.1">
    <property type="nucleotide sequence ID" value="NC_063383.1"/>
</dbReference>
<dbReference type="SMR" id="M1L535"/>
<dbReference type="GeneID" id="72551523"/>
<dbReference type="GeneID" id="929026"/>
<dbReference type="KEGG" id="vg:929026"/>
<dbReference type="Proteomes" id="UP000516359">
    <property type="component" value="Genome"/>
</dbReference>
<dbReference type="InterPro" id="IPR007952">
    <property type="entry name" value="Poxvirus_A2.5L"/>
</dbReference>
<dbReference type="Pfam" id="PF05288">
    <property type="entry name" value="Pox_A3L"/>
    <property type="match status" value="1"/>
</dbReference>
<organism>
    <name type="scientific">Monkeypox virus</name>
    <dbReference type="NCBI Taxonomy" id="10244"/>
    <lineage>
        <taxon>Viruses</taxon>
        <taxon>Varidnaviria</taxon>
        <taxon>Bamfordvirae</taxon>
        <taxon>Nucleocytoviricota</taxon>
        <taxon>Pokkesviricetes</taxon>
        <taxon>Chitovirales</taxon>
        <taxon>Poxviridae</taxon>
        <taxon>Chordopoxvirinae</taxon>
        <taxon>Orthopoxvirus</taxon>
    </lineage>
</organism>
<name>PG128_MONPV</name>
<organismHost>
    <name type="scientific">Cynomys gunnisoni</name>
    <name type="common">Gunnison's prairie dog</name>
    <name type="synonym">Spermophilus gunnisoni</name>
    <dbReference type="NCBI Taxonomy" id="45479"/>
</organismHost>
<organismHost>
    <name type="scientific">Cynomys leucurus</name>
    <name type="common">White-tailed prairie dog</name>
    <dbReference type="NCBI Taxonomy" id="99825"/>
</organismHost>
<organismHost>
    <name type="scientific">Cynomys ludovicianus</name>
    <name type="common">Black-tailed prairie dog</name>
    <dbReference type="NCBI Taxonomy" id="45480"/>
</organismHost>
<organismHost>
    <name type="scientific">Cynomys mexicanus</name>
    <name type="common">Mexican prairie dog</name>
    <dbReference type="NCBI Taxonomy" id="99826"/>
</organismHost>
<organismHost>
    <name type="scientific">Cynomys parvidens</name>
    <name type="common">Utah prairie dog</name>
    <dbReference type="NCBI Taxonomy" id="99827"/>
</organismHost>
<organismHost>
    <name type="scientific">Gliridae</name>
    <name type="common">dormice</name>
    <dbReference type="NCBI Taxonomy" id="30650"/>
</organismHost>
<organismHost>
    <name type="scientific">Heliosciurus ruwenzorii</name>
    <name type="common">Ruwenzori sun squirrel</name>
    <dbReference type="NCBI Taxonomy" id="226685"/>
</organismHost>
<organismHost>
    <name type="scientific">Homo sapiens</name>
    <name type="common">Human</name>
    <dbReference type="NCBI Taxonomy" id="9606"/>
</organismHost>
<organismHost>
    <name type="scientific">Mus musculus</name>
    <name type="common">Mouse</name>
    <dbReference type="NCBI Taxonomy" id="10090"/>
</organismHost>
<comment type="function">
    <text evidence="1">Late protein which probably participates in disulfide bond formation by functioning as a thiol-disulfide transfer protein between membrane-associated OPG072 and OPG08. The complete pathway for formation of disulfide bonds in intracellular virion membrane proteins sequentially involves oxidation of OPG072, OPG128 and OPG08.</text>
</comment>
<comment type="subunit">
    <text evidence="1">Interacts with sulfhydryl oxidase OPG072; this interaction involves formation of a transient disulfide-bonded intermediate, allowing disulfide bond transfer. Interacts with OPG088; this interaction involves formation of a transient disulfide-bonded intermediate, allowing disulfide bond transfer.</text>
</comment>
<comment type="induction">
    <text>Expressed in the late phase of the viral replicative cycle.</text>
</comment>
<comment type="similarity">
    <text evidence="2">Belongs to the orthopoxvirus OPG128 family.</text>
</comment>
<evidence type="ECO:0000250" key="1">
    <source>
        <dbReference type="UniProtKB" id="P07608"/>
    </source>
</evidence>
<evidence type="ECO:0000305" key="2"/>
<keyword id="KW-1015">Disulfide bond</keyword>
<keyword id="KW-1185">Reference proteome</keyword>
<sequence length="77" mass="9060">MSWYEKYNIVLNPPKRCSSTCSDNLTTILSEDGTNIIRAILYSQPKKLKILQDFLTTSRNKMFLYKILDDEIRRVLT</sequence>
<proteinExistence type="evidence at transcript level"/>
<gene>
    <name type="primary">OPG128</name>
    <name type="ORF">MPXVgp113</name>
</gene>
<reference key="1">
    <citation type="journal article" date="2013" name="Am. J. Trop. Med. Hyg.">
        <title>Detection of human monkeypox in the republic of the congo following intensive community education.</title>
        <authorList>
            <person name="Reynolds M.G."/>
            <person name="Emerson G.L."/>
            <person name="Pukuta E."/>
            <person name="Karhemere S."/>
            <person name="Muyembe J.J."/>
            <person name="Bikindou A."/>
            <person name="McCollum A.M."/>
            <person name="Moses C."/>
            <person name="Wilkins K."/>
            <person name="Zhao H."/>
            <person name="Damon I.K."/>
            <person name="Karem K.L."/>
            <person name="Li Y."/>
            <person name="Carroll D.S."/>
            <person name="Mombouli J.V."/>
        </authorList>
    </citation>
    <scope>NUCLEOTIDE SEQUENCE [GENOMIC DNA]</scope>
    <source>
        <strain>ROC2010</strain>
    </source>
</reference>
<reference key="2">
    <citation type="journal article" date="2022" name="J. Infect. Dis.">
        <title>Exportation of Monkeypox virus from the African continent.</title>
        <authorList>
            <person name="Mauldin M.R."/>
            <person name="McCollum A.M."/>
            <person name="Nakazawa Y.J."/>
            <person name="Mandra A."/>
            <person name="Whitehouse E.R."/>
            <person name="Davidson W."/>
            <person name="Zhao H."/>
            <person name="Gao J."/>
            <person name="Li Y."/>
            <person name="Doty J."/>
            <person name="Yinka-Ogunleye A."/>
            <person name="Akinpelu A."/>
            <person name="Aruna O."/>
            <person name="Naidoo D."/>
            <person name="Lewandowski K."/>
            <person name="Afrough B."/>
            <person name="Graham V."/>
            <person name="Aarons E."/>
            <person name="Hewson R."/>
            <person name="Vipond R."/>
            <person name="Dunning J."/>
            <person name="Chand M."/>
            <person name="Brown C."/>
            <person name="Cohen-Gihon I."/>
            <person name="Erez N."/>
            <person name="Shifman O."/>
            <person name="Israeli O."/>
            <person name="Sharon M."/>
            <person name="Schwartz E."/>
            <person name="Beth-Din A."/>
            <person name="Zvi A."/>
            <person name="Mak T.M."/>
            <person name="Ng Y.K."/>
            <person name="Cui L."/>
            <person name="Lin R.T.P."/>
            <person name="Olson V.A."/>
            <person name="Brooks T."/>
            <person name="Paran N."/>
            <person name="Ihekweazu C."/>
            <person name="Reynolds M.G."/>
        </authorList>
    </citation>
    <scope>NUCLEOTIDE SEQUENCE [LARGE SCALE GENOMIC DNA]</scope>
    <source>
        <strain>MPXV-M5312_HM12_Rivers</strain>
    </source>
</reference>